<name>CP1A1_CAVPO</name>
<feature type="chain" id="PRO_0000051626" description="Cytochrome P450 1A1">
    <location>
        <begin position="1"/>
        <end position="516"/>
    </location>
</feature>
<feature type="region of interest" description="Mitochondrial targeting signal" evidence="2">
    <location>
        <begin position="25"/>
        <end position="36"/>
    </location>
</feature>
<feature type="binding site" evidence="1">
    <location>
        <position position="220"/>
    </location>
    <ligand>
        <name>substrate</name>
    </ligand>
</feature>
<feature type="binding site" description="axial binding residue" evidence="1">
    <location>
        <position position="453"/>
    </location>
    <ligand>
        <name>heme</name>
        <dbReference type="ChEBI" id="CHEBI:30413"/>
    </ligand>
    <ligandPart>
        <name>Fe</name>
        <dbReference type="ChEBI" id="CHEBI:18248"/>
    </ligandPart>
</feature>
<feature type="glycosylation site" description="O-linked (GlcNAc) serine" evidence="1">
    <location>
        <position position="63"/>
    </location>
</feature>
<feature type="sequence conflict" description="In Ref. 2; AA sequence." evidence="4" ref="2">
    <location>
        <position position="2"/>
    </location>
</feature>
<feature type="sequence conflict" description="In Ref. 2; AA sequence." evidence="4" ref="2">
    <original>C</original>
    <variation>W</variation>
    <location>
        <position position="16"/>
    </location>
</feature>
<organism>
    <name type="scientific">Cavia porcellus</name>
    <name type="common">Guinea pig</name>
    <dbReference type="NCBI Taxonomy" id="10141"/>
    <lineage>
        <taxon>Eukaryota</taxon>
        <taxon>Metazoa</taxon>
        <taxon>Chordata</taxon>
        <taxon>Craniata</taxon>
        <taxon>Vertebrata</taxon>
        <taxon>Euteleostomi</taxon>
        <taxon>Mammalia</taxon>
        <taxon>Eutheria</taxon>
        <taxon>Euarchontoglires</taxon>
        <taxon>Glires</taxon>
        <taxon>Rodentia</taxon>
        <taxon>Hystricomorpha</taxon>
        <taxon>Caviidae</taxon>
        <taxon>Cavia</taxon>
    </lineage>
</organism>
<evidence type="ECO:0000250" key="1"/>
<evidence type="ECO:0000250" key="2">
    <source>
        <dbReference type="UniProtKB" id="P00185"/>
    </source>
</evidence>
<evidence type="ECO:0000250" key="3">
    <source>
        <dbReference type="UniProtKB" id="P04798"/>
    </source>
</evidence>
<evidence type="ECO:0000305" key="4"/>
<dbReference type="EC" id="1.14.14.1" evidence="3"/>
<dbReference type="EC" id="4.2.1.152" evidence="3"/>
<dbReference type="EMBL" id="D11043">
    <property type="protein sequence ID" value="BAA01794.1"/>
    <property type="molecule type" value="mRNA"/>
</dbReference>
<dbReference type="PIR" id="S43414">
    <property type="entry name" value="S43414"/>
</dbReference>
<dbReference type="RefSeq" id="NP_001166411.1">
    <property type="nucleotide sequence ID" value="NM_001172940.1"/>
</dbReference>
<dbReference type="RefSeq" id="XP_013000999.1">
    <property type="nucleotide sequence ID" value="XM_013145545.1"/>
</dbReference>
<dbReference type="SMR" id="Q06367"/>
<dbReference type="FunCoup" id="Q06367">
    <property type="interactions" value="1029"/>
</dbReference>
<dbReference type="STRING" id="10141.ENSCPOP00000014064"/>
<dbReference type="GlyCosmos" id="Q06367">
    <property type="glycosylation" value="1 site, No reported glycans"/>
</dbReference>
<dbReference type="Ensembl" id="ENSCPOT00000015748.3">
    <property type="protein sequence ID" value="ENSCPOP00000014064.2"/>
    <property type="gene ID" value="ENSCPOG00000015596.4"/>
</dbReference>
<dbReference type="GeneID" id="100135512"/>
<dbReference type="KEGG" id="cpoc:100135512"/>
<dbReference type="CTD" id="1543"/>
<dbReference type="VEuPathDB" id="HostDB:ENSCPOG00000015596"/>
<dbReference type="eggNOG" id="KOG0156">
    <property type="taxonomic scope" value="Eukaryota"/>
</dbReference>
<dbReference type="GeneTree" id="ENSGT00950000183037"/>
<dbReference type="HOGENOM" id="CLU_001570_22_0_1"/>
<dbReference type="InParanoid" id="Q06367"/>
<dbReference type="OMA" id="DPRAYWQ"/>
<dbReference type="OrthoDB" id="1055148at2759"/>
<dbReference type="TreeFam" id="TF105095"/>
<dbReference type="UniPathway" id="UPA00199"/>
<dbReference type="UniPathway" id="UPA00912"/>
<dbReference type="Proteomes" id="UP000005447">
    <property type="component" value="Unassembled WGS sequence"/>
</dbReference>
<dbReference type="Bgee" id="ENSCPOG00000015596">
    <property type="expression patterns" value="Expressed in liver and 3 other cell types or tissues"/>
</dbReference>
<dbReference type="GO" id="GO:0005789">
    <property type="term" value="C:endoplasmic reticulum membrane"/>
    <property type="evidence" value="ECO:0007669"/>
    <property type="project" value="UniProtKB-SubCell"/>
</dbReference>
<dbReference type="GO" id="GO:0005743">
    <property type="term" value="C:mitochondrial inner membrane"/>
    <property type="evidence" value="ECO:0000250"/>
    <property type="project" value="UniProtKB"/>
</dbReference>
<dbReference type="GO" id="GO:0008391">
    <property type="term" value="F:arachidonate monooxygenase activity"/>
    <property type="evidence" value="ECO:0007669"/>
    <property type="project" value="Ensembl"/>
</dbReference>
<dbReference type="GO" id="GO:0101020">
    <property type="term" value="F:estrogen 16-alpha-hydroxylase activity"/>
    <property type="evidence" value="ECO:0000250"/>
    <property type="project" value="UniProtKB"/>
</dbReference>
<dbReference type="GO" id="GO:0101021">
    <property type="term" value="F:estrogen 2-hydroxylase activity"/>
    <property type="evidence" value="ECO:0000250"/>
    <property type="project" value="UniProtKB"/>
</dbReference>
<dbReference type="GO" id="GO:0020037">
    <property type="term" value="F:heme binding"/>
    <property type="evidence" value="ECO:0007669"/>
    <property type="project" value="InterPro"/>
</dbReference>
<dbReference type="GO" id="GO:0030544">
    <property type="term" value="F:Hsp70 protein binding"/>
    <property type="evidence" value="ECO:0000250"/>
    <property type="project" value="UniProtKB"/>
</dbReference>
<dbReference type="GO" id="GO:0051879">
    <property type="term" value="F:Hsp90 protein binding"/>
    <property type="evidence" value="ECO:0000250"/>
    <property type="project" value="UniProtKB"/>
</dbReference>
<dbReference type="GO" id="GO:0106256">
    <property type="term" value="F:hydroperoxy icosatetraenoate dehydratase activity"/>
    <property type="evidence" value="ECO:0007669"/>
    <property type="project" value="UniProtKB-EC"/>
</dbReference>
<dbReference type="GO" id="GO:0005506">
    <property type="term" value="F:iron ion binding"/>
    <property type="evidence" value="ECO:0007669"/>
    <property type="project" value="InterPro"/>
</dbReference>
<dbReference type="GO" id="GO:0120319">
    <property type="term" value="F:long-chain fatty acid omega-1 hydroxylase activity"/>
    <property type="evidence" value="ECO:0007669"/>
    <property type="project" value="Ensembl"/>
</dbReference>
<dbReference type="GO" id="GO:0102033">
    <property type="term" value="F:long-chain fatty acid omega-hydroxylase activity"/>
    <property type="evidence" value="ECO:0007669"/>
    <property type="project" value="Ensembl"/>
</dbReference>
<dbReference type="GO" id="GO:0004508">
    <property type="term" value="F:steroid 17-alpha-monooxygenase activity"/>
    <property type="evidence" value="ECO:0007669"/>
    <property type="project" value="TreeGrafter"/>
</dbReference>
<dbReference type="GO" id="GO:0070576">
    <property type="term" value="F:vitamin D 24-hydroxylase activity"/>
    <property type="evidence" value="ECO:0007669"/>
    <property type="project" value="Ensembl"/>
</dbReference>
<dbReference type="GO" id="GO:0009308">
    <property type="term" value="P:amine metabolic process"/>
    <property type="evidence" value="ECO:0007669"/>
    <property type="project" value="Ensembl"/>
</dbReference>
<dbReference type="GO" id="GO:0008210">
    <property type="term" value="P:estrogen metabolic process"/>
    <property type="evidence" value="ECO:0000250"/>
    <property type="project" value="UniProtKB"/>
</dbReference>
<dbReference type="GO" id="GO:0042446">
    <property type="term" value="P:hormone biosynthetic process"/>
    <property type="evidence" value="ECO:0007669"/>
    <property type="project" value="TreeGrafter"/>
</dbReference>
<dbReference type="GO" id="GO:0050665">
    <property type="term" value="P:hydrogen peroxide biosynthetic process"/>
    <property type="evidence" value="ECO:0007669"/>
    <property type="project" value="Ensembl"/>
</dbReference>
<dbReference type="GO" id="GO:0002933">
    <property type="term" value="P:lipid hydroxylation"/>
    <property type="evidence" value="ECO:0007669"/>
    <property type="project" value="Ensembl"/>
</dbReference>
<dbReference type="GO" id="GO:0001676">
    <property type="term" value="P:long-chain fatty acid metabolic process"/>
    <property type="evidence" value="ECO:0007669"/>
    <property type="project" value="Ensembl"/>
</dbReference>
<dbReference type="GO" id="GO:0018958">
    <property type="term" value="P:phenol-containing compound metabolic process"/>
    <property type="evidence" value="ECO:0007669"/>
    <property type="project" value="Ensembl"/>
</dbReference>
<dbReference type="GO" id="GO:0042448">
    <property type="term" value="P:progesterone metabolic process"/>
    <property type="evidence" value="ECO:0007669"/>
    <property type="project" value="TreeGrafter"/>
</dbReference>
<dbReference type="GO" id="GO:0009636">
    <property type="term" value="P:response to toxic substance"/>
    <property type="evidence" value="ECO:0007669"/>
    <property type="project" value="Ensembl"/>
</dbReference>
<dbReference type="GO" id="GO:0042572">
    <property type="term" value="P:retinol metabolic process"/>
    <property type="evidence" value="ECO:0000250"/>
    <property type="project" value="UniProtKB"/>
</dbReference>
<dbReference type="GO" id="GO:0006694">
    <property type="term" value="P:steroid biosynthetic process"/>
    <property type="evidence" value="ECO:0007669"/>
    <property type="project" value="UniProtKB-KW"/>
</dbReference>
<dbReference type="GO" id="GO:0009404">
    <property type="term" value="P:toxin metabolic process"/>
    <property type="evidence" value="ECO:0007669"/>
    <property type="project" value="Ensembl"/>
</dbReference>
<dbReference type="GO" id="GO:0042359">
    <property type="term" value="P:vitamin D metabolic process"/>
    <property type="evidence" value="ECO:0007669"/>
    <property type="project" value="Ensembl"/>
</dbReference>
<dbReference type="GO" id="GO:0006805">
    <property type="term" value="P:xenobiotic metabolic process"/>
    <property type="evidence" value="ECO:0007669"/>
    <property type="project" value="Ensembl"/>
</dbReference>
<dbReference type="CDD" id="cd20676">
    <property type="entry name" value="CYP1A"/>
    <property type="match status" value="1"/>
</dbReference>
<dbReference type="FunFam" id="1.10.630.10:FF:000002">
    <property type="entry name" value="Cytochrome P450 1A1"/>
    <property type="match status" value="1"/>
</dbReference>
<dbReference type="Gene3D" id="1.10.630.10">
    <property type="entry name" value="Cytochrome P450"/>
    <property type="match status" value="1"/>
</dbReference>
<dbReference type="InterPro" id="IPR001128">
    <property type="entry name" value="Cyt_P450"/>
</dbReference>
<dbReference type="InterPro" id="IPR017972">
    <property type="entry name" value="Cyt_P450_CS"/>
</dbReference>
<dbReference type="InterPro" id="IPR002401">
    <property type="entry name" value="Cyt_P450_E_grp-I"/>
</dbReference>
<dbReference type="InterPro" id="IPR008066">
    <property type="entry name" value="Cyt_P450_E_grp-I_CYP1"/>
</dbReference>
<dbReference type="InterPro" id="IPR036396">
    <property type="entry name" value="Cyt_P450_sf"/>
</dbReference>
<dbReference type="PANTHER" id="PTHR24289:SF21">
    <property type="entry name" value="CYTOCHROME P450 1A"/>
    <property type="match status" value="1"/>
</dbReference>
<dbReference type="PANTHER" id="PTHR24289">
    <property type="entry name" value="STEROID 17-ALPHA-HYDROXYLASE/17,20 LYASE"/>
    <property type="match status" value="1"/>
</dbReference>
<dbReference type="Pfam" id="PF00067">
    <property type="entry name" value="p450"/>
    <property type="match status" value="1"/>
</dbReference>
<dbReference type="PRINTS" id="PR00463">
    <property type="entry name" value="EP450I"/>
</dbReference>
<dbReference type="PRINTS" id="PR01683">
    <property type="entry name" value="EP450ICYP1A"/>
</dbReference>
<dbReference type="PRINTS" id="PR00385">
    <property type="entry name" value="P450"/>
</dbReference>
<dbReference type="SUPFAM" id="SSF48264">
    <property type="entry name" value="Cytochrome P450"/>
    <property type="match status" value="1"/>
</dbReference>
<dbReference type="PROSITE" id="PS00086">
    <property type="entry name" value="CYTOCHROME_P450"/>
    <property type="match status" value="1"/>
</dbReference>
<keyword id="KW-0963">Cytoplasm</keyword>
<keyword id="KW-0903">Direct protein sequencing</keyword>
<keyword id="KW-0256">Endoplasmic reticulum</keyword>
<keyword id="KW-0325">Glycoprotein</keyword>
<keyword id="KW-0349">Heme</keyword>
<keyword id="KW-0408">Iron</keyword>
<keyword id="KW-0444">Lipid biosynthesis</keyword>
<keyword id="KW-0443">Lipid metabolism</keyword>
<keyword id="KW-0456">Lyase</keyword>
<keyword id="KW-0472">Membrane</keyword>
<keyword id="KW-0479">Metal-binding</keyword>
<keyword id="KW-0492">Microsome</keyword>
<keyword id="KW-0496">Mitochondrion</keyword>
<keyword id="KW-0999">Mitochondrion inner membrane</keyword>
<keyword id="KW-0503">Monooxygenase</keyword>
<keyword id="KW-0560">Oxidoreductase</keyword>
<keyword id="KW-1185">Reference proteome</keyword>
<keyword id="KW-0752">Steroid biosynthesis</keyword>
<proteinExistence type="evidence at protein level"/>
<gene>
    <name type="primary">CYP1A1</name>
</gene>
<accession>Q06367</accession>
<comment type="function">
    <text evidence="3">A cytochrome P450 monooxygenase involved in the metabolism of various endogenous substrates, including fatty acids, steroid hormones and vitamins. Mechanistically, uses molecular oxygen inserting one oxygen atom into a substrate, and reducing the second into a water molecule, with two electrons provided by NADPH via cytochrome P450 reductase (CPR; NADPH-ferrihemoprotein reductase). Catalyzes the hydroxylation of carbon-hydrogen bonds. Exhibits high catalytic activity for the formation of hydroxyestrogens from estrone (E1) and 17beta-estradiol (E2), namely 2-hydroxy E1 and E2, as well as D-ring hydroxylated E1 and E2 at the C15alpha and C16alpha positions. Displays different regioselectivities for polyunsaturated fatty acids (PUFA) hydroxylation. Catalyzes the epoxidation of double bonds of certain PUFA. Converts arachidonic acid toward epoxyeicosatrienoic acid (EET) regioisomers, 8,9-, 11,12-, and 14,15-EET, that function as lipid mediators in the vascular system. Displays an absolute stereoselectivity in the epoxidation of eicosapentaenoic acid (EPA) producing the 17(R),18(S) enantiomer. May play an important role in all-trans retinoic acid biosynthesis in extrahepatic tissues. Catalyzes two successive oxidative transformation of all-trans retinol to all-trans retinal and then to the active form all-trans retinoic acid. May also participate in eicosanoids metabolism by converting hydroperoxide species into oxo metabolites (lipoxygenase-like reaction, NADPH-independent).</text>
</comment>
<comment type="catalytic activity">
    <reaction evidence="3">
        <text>an organic molecule + reduced [NADPH--hemoprotein reductase] + O2 = an alcohol + oxidized [NADPH--hemoprotein reductase] + H2O + H(+)</text>
        <dbReference type="Rhea" id="RHEA:17149"/>
        <dbReference type="Rhea" id="RHEA-COMP:11964"/>
        <dbReference type="Rhea" id="RHEA-COMP:11965"/>
        <dbReference type="ChEBI" id="CHEBI:15377"/>
        <dbReference type="ChEBI" id="CHEBI:15378"/>
        <dbReference type="ChEBI" id="CHEBI:15379"/>
        <dbReference type="ChEBI" id="CHEBI:30879"/>
        <dbReference type="ChEBI" id="CHEBI:57618"/>
        <dbReference type="ChEBI" id="CHEBI:58210"/>
        <dbReference type="ChEBI" id="CHEBI:142491"/>
        <dbReference type="EC" id="1.14.14.1"/>
    </reaction>
    <physiologicalReaction direction="right-to-left" evidence="3">
        <dbReference type="Rhea" id="RHEA:17151"/>
    </physiologicalReaction>
</comment>
<comment type="catalytic activity">
    <reaction evidence="3">
        <text>estrone + reduced [NADPH--hemoprotein reductase] + O2 = 2-hydroxyestrone + oxidized [NADPH--hemoprotein reductase] + H2O + H(+)</text>
        <dbReference type="Rhea" id="RHEA:47208"/>
        <dbReference type="Rhea" id="RHEA-COMP:11964"/>
        <dbReference type="Rhea" id="RHEA-COMP:11965"/>
        <dbReference type="ChEBI" id="CHEBI:1156"/>
        <dbReference type="ChEBI" id="CHEBI:15377"/>
        <dbReference type="ChEBI" id="CHEBI:15378"/>
        <dbReference type="ChEBI" id="CHEBI:15379"/>
        <dbReference type="ChEBI" id="CHEBI:17263"/>
        <dbReference type="ChEBI" id="CHEBI:57618"/>
        <dbReference type="ChEBI" id="CHEBI:58210"/>
    </reaction>
    <physiologicalReaction direction="left-to-right" evidence="3">
        <dbReference type="Rhea" id="RHEA:47209"/>
    </physiologicalReaction>
</comment>
<comment type="catalytic activity">
    <reaction evidence="3">
        <text>estrone + reduced [NADPH--hemoprotein reductase] + O2 = 4-hydroxyestrone + oxidized [NADPH--hemoprotein reductase] + H2O + H(+)</text>
        <dbReference type="Rhea" id="RHEA:47292"/>
        <dbReference type="Rhea" id="RHEA-COMP:11964"/>
        <dbReference type="Rhea" id="RHEA-COMP:11965"/>
        <dbReference type="ChEBI" id="CHEBI:15377"/>
        <dbReference type="ChEBI" id="CHEBI:15378"/>
        <dbReference type="ChEBI" id="CHEBI:15379"/>
        <dbReference type="ChEBI" id="CHEBI:17263"/>
        <dbReference type="ChEBI" id="CHEBI:57618"/>
        <dbReference type="ChEBI" id="CHEBI:58210"/>
        <dbReference type="ChEBI" id="CHEBI:87602"/>
    </reaction>
    <physiologicalReaction direction="left-to-right" evidence="3">
        <dbReference type="Rhea" id="RHEA:47293"/>
    </physiologicalReaction>
</comment>
<comment type="catalytic activity">
    <reaction evidence="3">
        <text>estrone + reduced [NADPH--hemoprotein reductase] + O2 = 6alpha-hydroxyestrone + oxidized [NADPH--hemoprotein reductase] + H2O + H(+)</text>
        <dbReference type="Rhea" id="RHEA:47308"/>
        <dbReference type="Rhea" id="RHEA-COMP:11964"/>
        <dbReference type="Rhea" id="RHEA-COMP:11965"/>
        <dbReference type="ChEBI" id="CHEBI:15377"/>
        <dbReference type="ChEBI" id="CHEBI:15378"/>
        <dbReference type="ChEBI" id="CHEBI:15379"/>
        <dbReference type="ChEBI" id="CHEBI:17263"/>
        <dbReference type="ChEBI" id="CHEBI:57618"/>
        <dbReference type="ChEBI" id="CHEBI:58210"/>
        <dbReference type="ChEBI" id="CHEBI:87605"/>
    </reaction>
    <physiologicalReaction direction="left-to-right" evidence="3">
        <dbReference type="Rhea" id="RHEA:47309"/>
    </physiologicalReaction>
</comment>
<comment type="catalytic activity">
    <reaction evidence="3">
        <text>estrone + reduced [NADPH--hemoprotein reductase] + O2 = 15alpha-hydroxyestrone + oxidized [NADPH--hemoprotein reductase] + H2O + H(+)</text>
        <dbReference type="Rhea" id="RHEA:47312"/>
        <dbReference type="Rhea" id="RHEA-COMP:11964"/>
        <dbReference type="Rhea" id="RHEA-COMP:11965"/>
        <dbReference type="ChEBI" id="CHEBI:15377"/>
        <dbReference type="ChEBI" id="CHEBI:15378"/>
        <dbReference type="ChEBI" id="CHEBI:15379"/>
        <dbReference type="ChEBI" id="CHEBI:17263"/>
        <dbReference type="ChEBI" id="CHEBI:57618"/>
        <dbReference type="ChEBI" id="CHEBI:58210"/>
        <dbReference type="ChEBI" id="CHEBI:87618"/>
    </reaction>
    <physiologicalReaction direction="left-to-right" evidence="3">
        <dbReference type="Rhea" id="RHEA:47313"/>
    </physiologicalReaction>
</comment>
<comment type="catalytic activity">
    <reaction evidence="3">
        <text>estrone + reduced [NADPH--hemoprotein reductase] + O2 = 16alpha-hydroxyestrone + oxidized [NADPH--hemoprotein reductase] + H2O + H(+)</text>
        <dbReference type="Rhea" id="RHEA:47204"/>
        <dbReference type="Rhea" id="RHEA-COMP:11964"/>
        <dbReference type="Rhea" id="RHEA-COMP:11965"/>
        <dbReference type="ChEBI" id="CHEBI:776"/>
        <dbReference type="ChEBI" id="CHEBI:15377"/>
        <dbReference type="ChEBI" id="CHEBI:15378"/>
        <dbReference type="ChEBI" id="CHEBI:15379"/>
        <dbReference type="ChEBI" id="CHEBI:17263"/>
        <dbReference type="ChEBI" id="CHEBI:57618"/>
        <dbReference type="ChEBI" id="CHEBI:58210"/>
    </reaction>
    <physiologicalReaction direction="left-to-right" evidence="3">
        <dbReference type="Rhea" id="RHEA:47205"/>
    </physiologicalReaction>
</comment>
<comment type="catalytic activity">
    <reaction evidence="3">
        <text>17beta-estradiol + reduced [NADPH--hemoprotein reductase] + O2 = 2-hydroxy-17beta-estradiol + oxidized [NADPH--hemoprotein reductase] + H2O + H(+)</text>
        <dbReference type="Rhea" id="RHEA:47212"/>
        <dbReference type="Rhea" id="RHEA-COMP:11964"/>
        <dbReference type="Rhea" id="RHEA-COMP:11965"/>
        <dbReference type="ChEBI" id="CHEBI:15377"/>
        <dbReference type="ChEBI" id="CHEBI:15378"/>
        <dbReference type="ChEBI" id="CHEBI:15379"/>
        <dbReference type="ChEBI" id="CHEBI:16469"/>
        <dbReference type="ChEBI" id="CHEBI:28744"/>
        <dbReference type="ChEBI" id="CHEBI:57618"/>
        <dbReference type="ChEBI" id="CHEBI:58210"/>
    </reaction>
    <physiologicalReaction direction="left-to-right" evidence="3">
        <dbReference type="Rhea" id="RHEA:47213"/>
    </physiologicalReaction>
</comment>
<comment type="catalytic activity">
    <reaction evidence="3">
        <text>17beta-estradiol + reduced [NADPH--hemoprotein reductase] + O2 = 4-hydroxy-17beta-estradiol + oxidized [NADPH--hemoprotein reductase] + H2O + H(+)</text>
        <dbReference type="Rhea" id="RHEA:47280"/>
        <dbReference type="Rhea" id="RHEA-COMP:11964"/>
        <dbReference type="Rhea" id="RHEA-COMP:11965"/>
        <dbReference type="ChEBI" id="CHEBI:15377"/>
        <dbReference type="ChEBI" id="CHEBI:15378"/>
        <dbReference type="ChEBI" id="CHEBI:15379"/>
        <dbReference type="ChEBI" id="CHEBI:16469"/>
        <dbReference type="ChEBI" id="CHEBI:57618"/>
        <dbReference type="ChEBI" id="CHEBI:58210"/>
        <dbReference type="ChEBI" id="CHEBI:62845"/>
    </reaction>
    <physiologicalReaction direction="left-to-right" evidence="3">
        <dbReference type="Rhea" id="RHEA:47281"/>
    </physiologicalReaction>
</comment>
<comment type="catalytic activity">
    <reaction evidence="3">
        <text>17beta-estradiol + reduced [NADPH--hemoprotein reductase] + O2 = 6alpha-hydroxy-17beta-estradiol + oxidized [NADPH--hemoprotein reductase] + H2O + H(+)</text>
        <dbReference type="Rhea" id="RHEA:47284"/>
        <dbReference type="Rhea" id="RHEA-COMP:11964"/>
        <dbReference type="Rhea" id="RHEA-COMP:11965"/>
        <dbReference type="ChEBI" id="CHEBI:15377"/>
        <dbReference type="ChEBI" id="CHEBI:15378"/>
        <dbReference type="ChEBI" id="CHEBI:15379"/>
        <dbReference type="ChEBI" id="CHEBI:16469"/>
        <dbReference type="ChEBI" id="CHEBI:57618"/>
        <dbReference type="ChEBI" id="CHEBI:58210"/>
        <dbReference type="ChEBI" id="CHEBI:62847"/>
    </reaction>
    <physiologicalReaction direction="left-to-right" evidence="3">
        <dbReference type="Rhea" id="RHEA:47285"/>
    </physiologicalReaction>
</comment>
<comment type="catalytic activity">
    <reaction evidence="3">
        <text>17beta-estradiol + reduced [NADPH--hemoprotein reductase] + O2 = 7alpha-hydroxy-17beta-estradiol + oxidized [NADPH--hemoprotein reductase] + H2O + H(+)</text>
        <dbReference type="Rhea" id="RHEA:47288"/>
        <dbReference type="Rhea" id="RHEA-COMP:11964"/>
        <dbReference type="Rhea" id="RHEA-COMP:11965"/>
        <dbReference type="ChEBI" id="CHEBI:15377"/>
        <dbReference type="ChEBI" id="CHEBI:15378"/>
        <dbReference type="ChEBI" id="CHEBI:15379"/>
        <dbReference type="ChEBI" id="CHEBI:16469"/>
        <dbReference type="ChEBI" id="CHEBI:57618"/>
        <dbReference type="ChEBI" id="CHEBI:58210"/>
        <dbReference type="ChEBI" id="CHEBI:87598"/>
    </reaction>
    <physiologicalReaction direction="left-to-right" evidence="3">
        <dbReference type="Rhea" id="RHEA:47289"/>
    </physiologicalReaction>
</comment>
<comment type="catalytic activity">
    <reaction evidence="3">
        <text>17beta-estradiol + reduced [NADPH--hemoprotein reductase] + O2 = 15alpha-hydroxy-17beta-estradiol + oxidized [NADPH--hemoprotein reductase] + H2O + H(+)</text>
        <dbReference type="Rhea" id="RHEA:47276"/>
        <dbReference type="Rhea" id="RHEA-COMP:11964"/>
        <dbReference type="Rhea" id="RHEA-COMP:11965"/>
        <dbReference type="ChEBI" id="CHEBI:15377"/>
        <dbReference type="ChEBI" id="CHEBI:15378"/>
        <dbReference type="ChEBI" id="CHEBI:15379"/>
        <dbReference type="ChEBI" id="CHEBI:16469"/>
        <dbReference type="ChEBI" id="CHEBI:57618"/>
        <dbReference type="ChEBI" id="CHEBI:58210"/>
        <dbReference type="ChEBI" id="CHEBI:87593"/>
    </reaction>
    <physiologicalReaction direction="left-to-right" evidence="3">
        <dbReference type="Rhea" id="RHEA:47277"/>
    </physiologicalReaction>
</comment>
<comment type="catalytic activity">
    <reaction evidence="3">
        <text>(5Z,8Z,11Z)-eicosatrienoate + reduced [NADPH--hemoprotein reductase] + O2 = 19-hydroxy-(5Z,8Z,11Z)-eicosatrienoate + oxidized [NADPH--hemoprotein reductase] + H2O + H(+)</text>
        <dbReference type="Rhea" id="RHEA:50076"/>
        <dbReference type="Rhea" id="RHEA-COMP:11964"/>
        <dbReference type="Rhea" id="RHEA-COMP:11965"/>
        <dbReference type="ChEBI" id="CHEBI:15377"/>
        <dbReference type="ChEBI" id="CHEBI:15378"/>
        <dbReference type="ChEBI" id="CHEBI:15379"/>
        <dbReference type="ChEBI" id="CHEBI:57618"/>
        <dbReference type="ChEBI" id="CHEBI:58210"/>
        <dbReference type="ChEBI" id="CHEBI:78043"/>
        <dbReference type="ChEBI" id="CHEBI:132024"/>
    </reaction>
    <physiologicalReaction direction="left-to-right" evidence="3">
        <dbReference type="Rhea" id="RHEA:50077"/>
    </physiologicalReaction>
</comment>
<comment type="catalytic activity">
    <reaction evidence="3">
        <text>(5Z,8Z,11Z,14Z)-eicosatetraenoate + reduced [NADPH--hemoprotein reductase] + O2 = 16-hydroxy-(5Z,8Z,11Z,14Z)-eicosatetraenoate + oxidized [NADPH--hemoprotein reductase] + H2O + H(+)</text>
        <dbReference type="Rhea" id="RHEA:49972"/>
        <dbReference type="Rhea" id="RHEA-COMP:11964"/>
        <dbReference type="Rhea" id="RHEA-COMP:11965"/>
        <dbReference type="ChEBI" id="CHEBI:15377"/>
        <dbReference type="ChEBI" id="CHEBI:15378"/>
        <dbReference type="ChEBI" id="CHEBI:15379"/>
        <dbReference type="ChEBI" id="CHEBI:32395"/>
        <dbReference type="ChEBI" id="CHEBI:57618"/>
        <dbReference type="ChEBI" id="CHEBI:58210"/>
        <dbReference type="ChEBI" id="CHEBI:132019"/>
    </reaction>
    <physiologicalReaction direction="left-to-right" evidence="3">
        <dbReference type="Rhea" id="RHEA:49973"/>
    </physiologicalReaction>
</comment>
<comment type="catalytic activity">
    <reaction evidence="3">
        <text>(5Z,8Z,11Z,14Z)-eicosatetraenoate + reduced [NADPH--hemoprotein reductase] + O2 = 17-hydroxy-(5Z,8Z,11Z,14Z)-eicosatetraenoate + oxidized [NADPH--hemoprotein reductase] + H2O + H(+)</text>
        <dbReference type="Rhea" id="RHEA:49968"/>
        <dbReference type="Rhea" id="RHEA-COMP:11964"/>
        <dbReference type="Rhea" id="RHEA-COMP:11965"/>
        <dbReference type="ChEBI" id="CHEBI:15377"/>
        <dbReference type="ChEBI" id="CHEBI:15378"/>
        <dbReference type="ChEBI" id="CHEBI:15379"/>
        <dbReference type="ChEBI" id="CHEBI:32395"/>
        <dbReference type="ChEBI" id="CHEBI:57618"/>
        <dbReference type="ChEBI" id="CHEBI:58210"/>
        <dbReference type="ChEBI" id="CHEBI:132016"/>
    </reaction>
    <physiologicalReaction direction="left-to-right" evidence="3">
        <dbReference type="Rhea" id="RHEA:49969"/>
    </physiologicalReaction>
</comment>
<comment type="catalytic activity">
    <reaction evidence="3">
        <text>(5Z,8Z,11Z,14Z)-eicosatetraenoate + reduced [NADPH--hemoprotein reductase] + O2 = 18-hydroxy-(5Z,8Z,11Z,14Z)-eicosatetraenoate + oxidized [NADPH--hemoprotein reductase] + H2O + H(+)</text>
        <dbReference type="Rhea" id="RHEA:39811"/>
        <dbReference type="Rhea" id="RHEA-COMP:11964"/>
        <dbReference type="Rhea" id="RHEA-COMP:11965"/>
        <dbReference type="ChEBI" id="CHEBI:15377"/>
        <dbReference type="ChEBI" id="CHEBI:15378"/>
        <dbReference type="ChEBI" id="CHEBI:15379"/>
        <dbReference type="ChEBI" id="CHEBI:32395"/>
        <dbReference type="ChEBI" id="CHEBI:57618"/>
        <dbReference type="ChEBI" id="CHEBI:58210"/>
        <dbReference type="ChEBI" id="CHEBI:63590"/>
    </reaction>
    <physiologicalReaction direction="left-to-right" evidence="3">
        <dbReference type="Rhea" id="RHEA:39812"/>
    </physiologicalReaction>
</comment>
<comment type="catalytic activity">
    <reaction evidence="3">
        <text>(5Z,8Z,11Z,14Z)-eicosatetraenoate + reduced [NADPH--hemoprotein reductase] + O2 = 19-hydroxy-(5Z,8Z,11Z,14Z)-eicosatetraenoate + oxidized [NADPH--hemoprotein reductase] + H2O + H(+)</text>
        <dbReference type="Rhea" id="RHEA:39759"/>
        <dbReference type="Rhea" id="RHEA-COMP:11964"/>
        <dbReference type="Rhea" id="RHEA-COMP:11965"/>
        <dbReference type="ChEBI" id="CHEBI:15377"/>
        <dbReference type="ChEBI" id="CHEBI:15378"/>
        <dbReference type="ChEBI" id="CHEBI:15379"/>
        <dbReference type="ChEBI" id="CHEBI:32395"/>
        <dbReference type="ChEBI" id="CHEBI:57618"/>
        <dbReference type="ChEBI" id="CHEBI:58210"/>
        <dbReference type="ChEBI" id="CHEBI:76627"/>
    </reaction>
    <physiologicalReaction direction="left-to-right" evidence="3">
        <dbReference type="Rhea" id="RHEA:39760"/>
    </physiologicalReaction>
</comment>
<comment type="catalytic activity">
    <reaction evidence="3">
        <text>(5Z,8Z,11Z,14Z,17Z)-eicosapentaenoate + reduced [NADPH--hemoprotein reductase] + O2 = 19-hydroxy-(5Z,8Z,11Z,14Z,17Z)-eicosapentaenoate + oxidized [NADPH--hemoprotein reductase] + H2O + H(+)</text>
        <dbReference type="Rhea" id="RHEA:39787"/>
        <dbReference type="Rhea" id="RHEA-COMP:11964"/>
        <dbReference type="Rhea" id="RHEA-COMP:11965"/>
        <dbReference type="ChEBI" id="CHEBI:15377"/>
        <dbReference type="ChEBI" id="CHEBI:15378"/>
        <dbReference type="ChEBI" id="CHEBI:15379"/>
        <dbReference type="ChEBI" id="CHEBI:57618"/>
        <dbReference type="ChEBI" id="CHEBI:58210"/>
        <dbReference type="ChEBI" id="CHEBI:58562"/>
        <dbReference type="ChEBI" id="CHEBI:76636"/>
    </reaction>
    <physiologicalReaction direction="left-to-right" evidence="3">
        <dbReference type="Rhea" id="RHEA:39788"/>
    </physiologicalReaction>
</comment>
<comment type="catalytic activity">
    <reaction evidence="3">
        <text>(5Z,8Z,11Z,14Z)-eicosatetraenoate + reduced [NADPH--hemoprotein reductase] + O2 = (8R,9S)-epoxy-(5Z,11Z,14Z)-eicosatrienoate + oxidized [NADPH--hemoprotein reductase] + H2O + H(+)</text>
        <dbReference type="Rhea" id="RHEA:49884"/>
        <dbReference type="Rhea" id="RHEA-COMP:11964"/>
        <dbReference type="Rhea" id="RHEA-COMP:11965"/>
        <dbReference type="ChEBI" id="CHEBI:15377"/>
        <dbReference type="ChEBI" id="CHEBI:15378"/>
        <dbReference type="ChEBI" id="CHEBI:15379"/>
        <dbReference type="ChEBI" id="CHEBI:32395"/>
        <dbReference type="ChEBI" id="CHEBI:57618"/>
        <dbReference type="ChEBI" id="CHEBI:58210"/>
        <dbReference type="ChEBI" id="CHEBI:131975"/>
    </reaction>
    <physiologicalReaction direction="left-to-right" evidence="3">
        <dbReference type="Rhea" id="RHEA:49885"/>
    </physiologicalReaction>
</comment>
<comment type="catalytic activity">
    <reaction evidence="3">
        <text>(5Z,8Z,11Z,14Z)-eicosatetraenoate + reduced [NADPH--hemoprotein reductase] + O2 = (11R,12S)-epoxy-(5Z,8Z,14Z)-eicosatrienoate + oxidized [NADPH--hemoprotein reductase] + H2O + H(+)</text>
        <dbReference type="Rhea" id="RHEA:49880"/>
        <dbReference type="Rhea" id="RHEA-COMP:11964"/>
        <dbReference type="Rhea" id="RHEA-COMP:11965"/>
        <dbReference type="ChEBI" id="CHEBI:15377"/>
        <dbReference type="ChEBI" id="CHEBI:15378"/>
        <dbReference type="ChEBI" id="CHEBI:15379"/>
        <dbReference type="ChEBI" id="CHEBI:32395"/>
        <dbReference type="ChEBI" id="CHEBI:57618"/>
        <dbReference type="ChEBI" id="CHEBI:58210"/>
        <dbReference type="ChEBI" id="CHEBI:131970"/>
    </reaction>
    <physiologicalReaction direction="left-to-right" evidence="3">
        <dbReference type="Rhea" id="RHEA:49881"/>
    </physiologicalReaction>
</comment>
<comment type="catalytic activity">
    <reaction evidence="3">
        <text>(5Z,8Z,11Z,14Z)-eicosatetraenoate + reduced [NADPH--hemoprotein reductase] + O2 = (14S,15R)-epoxy-(5Z,8Z,11Z)-eicosatrienoate + oxidized [NADPH--hemoprotein reductase] + H2O + H(+)</text>
        <dbReference type="Rhea" id="RHEA:49856"/>
        <dbReference type="Rhea" id="RHEA-COMP:11964"/>
        <dbReference type="Rhea" id="RHEA-COMP:11965"/>
        <dbReference type="ChEBI" id="CHEBI:15377"/>
        <dbReference type="ChEBI" id="CHEBI:15378"/>
        <dbReference type="ChEBI" id="CHEBI:15379"/>
        <dbReference type="ChEBI" id="CHEBI:32395"/>
        <dbReference type="ChEBI" id="CHEBI:57618"/>
        <dbReference type="ChEBI" id="CHEBI:58210"/>
        <dbReference type="ChEBI" id="CHEBI:131964"/>
    </reaction>
    <physiologicalReaction direction="left-to-right" evidence="3">
        <dbReference type="Rhea" id="RHEA:49857"/>
    </physiologicalReaction>
</comment>
<comment type="catalytic activity">
    <reaction evidence="3">
        <text>(5Z,8Z,11Z,14Z)-eicosatetraenoate + reduced [NADPH--hemoprotein reductase] + O2 = (14R,15S)-epoxy-(5Z,8Z,11Z)-eicosatrienoate + oxidized [NADPH--hemoprotein reductase] + H2O + H(+)</text>
        <dbReference type="Rhea" id="RHEA:49860"/>
        <dbReference type="Rhea" id="RHEA-COMP:11964"/>
        <dbReference type="Rhea" id="RHEA-COMP:11965"/>
        <dbReference type="ChEBI" id="CHEBI:15377"/>
        <dbReference type="ChEBI" id="CHEBI:15378"/>
        <dbReference type="ChEBI" id="CHEBI:15379"/>
        <dbReference type="ChEBI" id="CHEBI:32395"/>
        <dbReference type="ChEBI" id="CHEBI:57618"/>
        <dbReference type="ChEBI" id="CHEBI:58210"/>
        <dbReference type="ChEBI" id="CHEBI:131965"/>
    </reaction>
    <physiologicalReaction direction="left-to-right" evidence="3">
        <dbReference type="Rhea" id="RHEA:49861"/>
    </physiologicalReaction>
</comment>
<comment type="catalytic activity">
    <reaction evidence="3">
        <text>(5Z,8Z,11Z,14Z,17Z)-eicosapentaenoate + reduced [NADPH--hemoprotein reductase] + O2 = (17R,18S)-epoxy-(5Z,8Z,11Z,14Z)-eicosatetraenoate + oxidized [NADPH--hemoprotein reductase] + H2O + H(+)</text>
        <dbReference type="Rhea" id="RHEA:39779"/>
        <dbReference type="Rhea" id="RHEA-COMP:11964"/>
        <dbReference type="Rhea" id="RHEA-COMP:11965"/>
        <dbReference type="ChEBI" id="CHEBI:15377"/>
        <dbReference type="ChEBI" id="CHEBI:15378"/>
        <dbReference type="ChEBI" id="CHEBI:15379"/>
        <dbReference type="ChEBI" id="CHEBI:57618"/>
        <dbReference type="ChEBI" id="CHEBI:58210"/>
        <dbReference type="ChEBI" id="CHEBI:58562"/>
        <dbReference type="ChEBI" id="CHEBI:76634"/>
    </reaction>
    <physiologicalReaction direction="left-to-right" evidence="3">
        <dbReference type="Rhea" id="RHEA:39780"/>
    </physiologicalReaction>
</comment>
<comment type="catalytic activity">
    <reaction evidence="3">
        <text>(4Z,7Z,10Z,13Z,16Z,19Z)-docosahexaenoate + reduced [NADPH--hemoprotein reductase] + O2 = (19S,20R)-epoxy-(4Z,7Z,10Z,13Z,16Z)-docosapentaenoate + oxidized [NADPH--hemoprotein reductase] + H2O + H(+)</text>
        <dbReference type="Rhea" id="RHEA:52124"/>
        <dbReference type="Rhea" id="RHEA-COMP:11964"/>
        <dbReference type="Rhea" id="RHEA-COMP:11965"/>
        <dbReference type="ChEBI" id="CHEBI:15377"/>
        <dbReference type="ChEBI" id="CHEBI:15378"/>
        <dbReference type="ChEBI" id="CHEBI:15379"/>
        <dbReference type="ChEBI" id="CHEBI:57618"/>
        <dbReference type="ChEBI" id="CHEBI:58210"/>
        <dbReference type="ChEBI" id="CHEBI:77016"/>
        <dbReference type="ChEBI" id="CHEBI:136411"/>
    </reaction>
    <physiologicalReaction direction="left-to-right" evidence="3">
        <dbReference type="Rhea" id="RHEA:52125"/>
    </physiologicalReaction>
</comment>
<comment type="catalytic activity">
    <reaction evidence="3">
        <text>(4Z,7Z,10Z,13Z,16Z,19Z)-docosahexaenoate + reduced [NADPH--hemoprotein reductase] + O2 = (19R,20S)-epoxy-(4Z,7Z,10Z,13Z,16Z)-docosapentaenoate + oxidized [NADPH--hemoprotein reductase] + H2O + H(+)</text>
        <dbReference type="Rhea" id="RHEA:52120"/>
        <dbReference type="Rhea" id="RHEA-COMP:11964"/>
        <dbReference type="Rhea" id="RHEA-COMP:11965"/>
        <dbReference type="ChEBI" id="CHEBI:15377"/>
        <dbReference type="ChEBI" id="CHEBI:15378"/>
        <dbReference type="ChEBI" id="CHEBI:15379"/>
        <dbReference type="ChEBI" id="CHEBI:57618"/>
        <dbReference type="ChEBI" id="CHEBI:58210"/>
        <dbReference type="ChEBI" id="CHEBI:77016"/>
        <dbReference type="ChEBI" id="CHEBI:136410"/>
    </reaction>
    <physiologicalReaction direction="left-to-right" evidence="3">
        <dbReference type="Rhea" id="RHEA:52121"/>
    </physiologicalReaction>
</comment>
<comment type="catalytic activity">
    <reaction evidence="3">
        <text>all-trans-retinol + reduced [NADPH--hemoprotein reductase] + O2 = all-trans-retinal + oxidized [NADPH--hemoprotein reductase] + 2 H2O + H(+)</text>
        <dbReference type="Rhea" id="RHEA:42092"/>
        <dbReference type="Rhea" id="RHEA-COMP:11964"/>
        <dbReference type="Rhea" id="RHEA-COMP:11965"/>
        <dbReference type="ChEBI" id="CHEBI:15377"/>
        <dbReference type="ChEBI" id="CHEBI:15378"/>
        <dbReference type="ChEBI" id="CHEBI:15379"/>
        <dbReference type="ChEBI" id="CHEBI:17336"/>
        <dbReference type="ChEBI" id="CHEBI:17898"/>
        <dbReference type="ChEBI" id="CHEBI:57618"/>
        <dbReference type="ChEBI" id="CHEBI:58210"/>
    </reaction>
    <physiologicalReaction direction="left-to-right" evidence="3">
        <dbReference type="Rhea" id="RHEA:42093"/>
    </physiologicalReaction>
</comment>
<comment type="catalytic activity">
    <reaction evidence="3">
        <text>all-trans-retinal + reduced [NADPH--hemoprotein reductase] + O2 = all-trans-retinoate + oxidized [NADPH--hemoprotein reductase] + H2O + 2 H(+)</text>
        <dbReference type="Rhea" id="RHEA:42088"/>
        <dbReference type="Rhea" id="RHEA-COMP:11964"/>
        <dbReference type="Rhea" id="RHEA-COMP:11965"/>
        <dbReference type="ChEBI" id="CHEBI:15377"/>
        <dbReference type="ChEBI" id="CHEBI:15378"/>
        <dbReference type="ChEBI" id="CHEBI:15379"/>
        <dbReference type="ChEBI" id="CHEBI:17898"/>
        <dbReference type="ChEBI" id="CHEBI:35291"/>
        <dbReference type="ChEBI" id="CHEBI:57618"/>
        <dbReference type="ChEBI" id="CHEBI:58210"/>
    </reaction>
    <physiologicalReaction direction="left-to-right" evidence="3">
        <dbReference type="Rhea" id="RHEA:42089"/>
    </physiologicalReaction>
</comment>
<comment type="catalytic activity">
    <reaction evidence="3">
        <text>(13S)-hydroperoxy-(9Z,11E)-octadecadienoate = 13-oxo-(9Z,11E)-octadecadienoate + H2O</text>
        <dbReference type="Rhea" id="RHEA:48716"/>
        <dbReference type="ChEBI" id="CHEBI:15377"/>
        <dbReference type="ChEBI" id="CHEBI:57466"/>
        <dbReference type="ChEBI" id="CHEBI:90781"/>
    </reaction>
    <physiologicalReaction direction="left-to-right" evidence="3">
        <dbReference type="Rhea" id="RHEA:48717"/>
    </physiologicalReaction>
</comment>
<comment type="catalytic activity">
    <reaction evidence="3">
        <text>(12S)-hydroperoxy-(5Z,8Z,10E,14Z)-eicosatetraenoate = 12-oxo-(5Z,8Z,10E,14Z)-eicosatetraenoate + H2O</text>
        <dbReference type="Rhea" id="RHEA:37947"/>
        <dbReference type="ChEBI" id="CHEBI:15377"/>
        <dbReference type="ChEBI" id="CHEBI:57444"/>
        <dbReference type="ChEBI" id="CHEBI:75231"/>
        <dbReference type="EC" id="4.2.1.152"/>
    </reaction>
    <physiologicalReaction direction="left-to-right" evidence="3">
        <dbReference type="Rhea" id="RHEA:37948"/>
    </physiologicalReaction>
</comment>
<comment type="catalytic activity">
    <reaction evidence="3">
        <text>(15S)-hydroperoxy-(5Z,8Z,11Z,13E)-eicosatetraenoate = 15-oxo-(5Z,8Z,11Z,13E)-eicosatetraenoate + H2O</text>
        <dbReference type="Rhea" id="RHEA:48636"/>
        <dbReference type="ChEBI" id="CHEBI:15377"/>
        <dbReference type="ChEBI" id="CHEBI:57410"/>
        <dbReference type="ChEBI" id="CHEBI:57446"/>
    </reaction>
    <physiologicalReaction direction="left-to-right" evidence="3">
        <dbReference type="Rhea" id="RHEA:48637"/>
    </physiologicalReaction>
</comment>
<comment type="catalytic activity">
    <reaction evidence="3">
        <text>(5S)-hydroperoxy-(6E,8Z,11Z,14Z)-eicosatetraenoate = 5-oxo-(6E,8Z,11Z,14Z)-eicosatetraenoate + H2O</text>
        <dbReference type="Rhea" id="RHEA:48632"/>
        <dbReference type="ChEBI" id="CHEBI:15377"/>
        <dbReference type="ChEBI" id="CHEBI:57450"/>
        <dbReference type="ChEBI" id="CHEBI:65342"/>
    </reaction>
    <physiologicalReaction direction="left-to-right" evidence="3">
        <dbReference type="Rhea" id="RHEA:48633"/>
    </physiologicalReaction>
</comment>
<comment type="cofactor">
    <cofactor evidence="1">
        <name>heme</name>
        <dbReference type="ChEBI" id="CHEBI:30413"/>
    </cofactor>
</comment>
<comment type="pathway">
    <text evidence="3">Steroid hormone biosynthesis.</text>
</comment>
<comment type="pathway">
    <text evidence="3">Lipid metabolism; fatty acid metabolism.</text>
</comment>
<comment type="pathway">
    <text evidence="3">Cofactor metabolism; retinol metabolism.</text>
</comment>
<comment type="subunit">
    <text evidence="2">Interacts with cytosolic chaperones HSP70 and HSP90; this interaction is required for initial targeting to mitochondria. Interacts (via mitochondrial targeting signal) with TOMM40 (via N-terminus); this interaction is required for translocation across the mitochondrial outer membrane.</text>
</comment>
<comment type="subcellular location">
    <subcellularLocation>
        <location evidence="2">Endoplasmic reticulum membrane</location>
        <topology evidence="2">Peripheral membrane protein</topology>
    </subcellularLocation>
    <subcellularLocation>
        <location evidence="2">Mitochondrion inner membrane</location>
        <topology evidence="2">Peripheral membrane protein</topology>
    </subcellularLocation>
    <subcellularLocation>
        <location evidence="2">Microsome membrane</location>
        <topology evidence="2">Peripheral membrane protein</topology>
    </subcellularLocation>
    <subcellularLocation>
        <location evidence="2">Cytoplasm</location>
    </subcellularLocation>
</comment>
<comment type="tissue specificity">
    <text>Constitutively expressed in liver.</text>
</comment>
<comment type="induction">
    <text>By 3-methylcholanthrene (3MC).</text>
</comment>
<comment type="miscellaneous">
    <text>Constitutive expression of this enzyme in liver may be related to the sensitivity of guinea pig to TCDD.</text>
</comment>
<comment type="similarity">
    <text evidence="4">Belongs to the cytochrome P450 family.</text>
</comment>
<protein>
    <recommendedName>
        <fullName>Cytochrome P450 1A1</fullName>
        <ecNumber evidence="3">1.14.14.1</ecNumber>
    </recommendedName>
    <alternativeName>
        <fullName>CYPIA1</fullName>
    </alternativeName>
    <alternativeName>
        <fullName>Cytochrome P450 form 6</fullName>
    </alternativeName>
    <alternativeName>
        <fullName>Cytochrome P450-C</fullName>
    </alternativeName>
    <alternativeName>
        <fullName>Cytochrome P450-P1</fullName>
    </alternativeName>
    <alternativeName>
        <fullName>Hydroperoxy icosatetraenoate dehydratase</fullName>
        <ecNumber evidence="3">4.2.1.152</ecNumber>
    </alternativeName>
</protein>
<sequence length="516" mass="58571">MSTSAMELLLTATIFCLVLWVVRIFRPQVPKGLKSPPGPWGWPLIGHMLTLGKNPHLALTRLSARYGDVLQIRIGSTPVVVLSGLDTIRQALVRQGDDFKGRPDLYSFTFISDGQSMTFNPDSGPVWAARRRLAQSALKSFSVASDPASVSSCYLEEHVKKEAEYLIKKFQELMAGPGHFDPYRYVVVSVANVISAICFGQRYSHDDQQLLELIDLNNEFGEVTGSGNPSDFIPILRYLPSATMDTFKDLNRRFSVFIQKMIKEHYKTFEKGHIRDITDSLIEHCQDRKLDKNANIQISDQKIIGIVLDLFGAGFDTITTAISWSLLYLVMNPRIQKKIQEELDTVIGRERQPQLADRPKLPYMEAFISEVFRYSSFMPFTIPHSTTKDTSLNGFYIPKGCCIFVNQWQINHDQKLWGDPSVFRPERFLSPDGTVDKALSEKVTIFGLGKRRCLGEVIGRWEVFLFLAILLQQLEFSTSPGVKIDMTPIYGLTMKYSRCEHFQAQTRPFVLKCPEA</sequence>
<reference key="1">
    <citation type="journal article" date="1993" name="Biochim. Biophys. Acta">
        <title>Molecular cloning of guinea pig CYP1A1: complete primary structure and fast mobility of expressed protein on electrophoresis.</title>
        <authorList>
            <person name="Ohgiya S."/>
            <person name="Ishizaki K."/>
            <person name="Shinriki N."/>
        </authorList>
    </citation>
    <scope>NUCLEOTIDE SEQUENCE [MRNA]</scope>
    <source>
        <strain>Hartley</strain>
        <tissue>Liver</tissue>
    </source>
</reference>
<reference key="2">
    <citation type="journal article" date="1986" name="Biochemistry">
        <title>Amino-terminal sequence and structure of monoclonal antibody immunopurified cytochromes P-450.</title>
        <authorList>
            <person name="Cheng K.C."/>
            <person name="Park S.S."/>
            <person name="Krutzsch H.C."/>
            <person name="Grantham P.H."/>
            <person name="Gelboin H.V."/>
            <person name="Friedman F.K."/>
        </authorList>
    </citation>
    <scope>PROTEIN SEQUENCE OF 1-24</scope>
    <source>
        <tissue>Liver</tissue>
    </source>
</reference>